<reference key="1">
    <citation type="journal article" date="2000" name="Arch. Biochem. Biophys.">
        <title>Phospholipase A(2) with platelet aggregation inhibitor activity from Austrelaps superbus venom: protein purification and cDNA cloning.</title>
        <authorList>
            <person name="Singh S.B."/>
            <person name="Armugam A."/>
            <person name="Kini R.M."/>
            <person name="Jeyaseelan K."/>
        </authorList>
    </citation>
    <scope>PROTEIN SEQUENCE</scope>
    <scope>MASS SPECTROMETRY</scope>
    <source>
        <tissue>Venom</tissue>
    </source>
</reference>
<sequence>NLIQLSNMIKCAIPGSRPLLHYTDYGCYCGKGGSGTPVDELDRCCK</sequence>
<dbReference type="EC" id="3.1.1.4"/>
<dbReference type="SMR" id="P59069"/>
<dbReference type="GO" id="GO:0005576">
    <property type="term" value="C:extracellular region"/>
    <property type="evidence" value="ECO:0007669"/>
    <property type="project" value="UniProtKB-SubCell"/>
</dbReference>
<dbReference type="GO" id="GO:0005509">
    <property type="term" value="F:calcium ion binding"/>
    <property type="evidence" value="ECO:0007669"/>
    <property type="project" value="InterPro"/>
</dbReference>
<dbReference type="GO" id="GO:0047498">
    <property type="term" value="F:calcium-dependent phospholipase A2 activity"/>
    <property type="evidence" value="ECO:0007669"/>
    <property type="project" value="TreeGrafter"/>
</dbReference>
<dbReference type="GO" id="GO:0005543">
    <property type="term" value="F:phospholipid binding"/>
    <property type="evidence" value="ECO:0007669"/>
    <property type="project" value="TreeGrafter"/>
</dbReference>
<dbReference type="GO" id="GO:0090729">
    <property type="term" value="F:toxin activity"/>
    <property type="evidence" value="ECO:0007669"/>
    <property type="project" value="UniProtKB-KW"/>
</dbReference>
<dbReference type="GO" id="GO:0050482">
    <property type="term" value="P:arachidonate secretion"/>
    <property type="evidence" value="ECO:0007669"/>
    <property type="project" value="InterPro"/>
</dbReference>
<dbReference type="GO" id="GO:0016042">
    <property type="term" value="P:lipid catabolic process"/>
    <property type="evidence" value="ECO:0007669"/>
    <property type="project" value="UniProtKB-KW"/>
</dbReference>
<dbReference type="GO" id="GO:0006644">
    <property type="term" value="P:phospholipid metabolic process"/>
    <property type="evidence" value="ECO:0007669"/>
    <property type="project" value="InterPro"/>
</dbReference>
<dbReference type="Gene3D" id="1.20.90.10">
    <property type="entry name" value="Phospholipase A2 domain"/>
    <property type="match status" value="1"/>
</dbReference>
<dbReference type="InterPro" id="IPR001211">
    <property type="entry name" value="PLipase_A2"/>
</dbReference>
<dbReference type="InterPro" id="IPR016090">
    <property type="entry name" value="PLipase_A2_dom"/>
</dbReference>
<dbReference type="InterPro" id="IPR036444">
    <property type="entry name" value="PLipase_A2_dom_sf"/>
</dbReference>
<dbReference type="PANTHER" id="PTHR11716:SF94">
    <property type="entry name" value="PHOSPHOLIPASE A2"/>
    <property type="match status" value="1"/>
</dbReference>
<dbReference type="PANTHER" id="PTHR11716">
    <property type="entry name" value="PHOSPHOLIPASE A2 FAMILY MEMBER"/>
    <property type="match status" value="1"/>
</dbReference>
<dbReference type="Pfam" id="PF00068">
    <property type="entry name" value="Phospholip_A2_1"/>
    <property type="match status" value="1"/>
</dbReference>
<dbReference type="PRINTS" id="PR00389">
    <property type="entry name" value="PHPHLIPASEA2"/>
</dbReference>
<dbReference type="SMART" id="SM00085">
    <property type="entry name" value="PA2c"/>
    <property type="match status" value="1"/>
</dbReference>
<dbReference type="SUPFAM" id="SSF48619">
    <property type="entry name" value="Phospholipase A2, PLA2"/>
    <property type="match status" value="1"/>
</dbReference>
<name>PA2SC_AUSSU</name>
<evidence type="ECO:0000250" key="1"/>
<evidence type="ECO:0000255" key="2">
    <source>
        <dbReference type="PROSITE-ProRule" id="PRU10035"/>
    </source>
</evidence>
<evidence type="ECO:0000269" key="3">
    <source>
    </source>
</evidence>
<evidence type="ECO:0000305" key="4"/>
<organism>
    <name type="scientific">Austrelaps superbus</name>
    <name type="common">Lowland copperhead snake</name>
    <name type="synonym">Hoplocephalus superbus</name>
    <dbReference type="NCBI Taxonomy" id="29156"/>
    <lineage>
        <taxon>Eukaryota</taxon>
        <taxon>Metazoa</taxon>
        <taxon>Chordata</taxon>
        <taxon>Craniata</taxon>
        <taxon>Vertebrata</taxon>
        <taxon>Euteleostomi</taxon>
        <taxon>Lepidosauria</taxon>
        <taxon>Squamata</taxon>
        <taxon>Bifurcata</taxon>
        <taxon>Unidentata</taxon>
        <taxon>Episquamata</taxon>
        <taxon>Toxicofera</taxon>
        <taxon>Serpentes</taxon>
        <taxon>Colubroidea</taxon>
        <taxon>Elapidae</taxon>
        <taxon>Hydrophiinae</taxon>
        <taxon>Austrelaps</taxon>
    </lineage>
</organism>
<protein>
    <recommendedName>
        <fullName>Phospholipase A2 superbin c</fullName>
        <shortName>svPLA2</shortName>
        <ecNumber>3.1.1.4</ecNumber>
    </recommendedName>
    <alternativeName>
        <fullName>Phosphatidylcholine 2-acylhydrolase</fullName>
    </alternativeName>
</protein>
<accession>P59069</accession>
<proteinExistence type="evidence at protein level"/>
<feature type="chain" id="PRO_0000161612" description="Phospholipase A2 superbin c">
    <location>
        <begin position="1"/>
        <end position="46" status="greater than"/>
    </location>
</feature>
<feature type="binding site" evidence="1">
    <location>
        <position position="28"/>
    </location>
    <ligand>
        <name>Ca(2+)</name>
        <dbReference type="ChEBI" id="CHEBI:29108"/>
    </ligand>
</feature>
<feature type="binding site" evidence="1">
    <location>
        <position position="30"/>
    </location>
    <ligand>
        <name>Ca(2+)</name>
        <dbReference type="ChEBI" id="CHEBI:29108"/>
    </ligand>
</feature>
<feature type="binding site" evidence="1">
    <location>
        <position position="32"/>
    </location>
    <ligand>
        <name>Ca(2+)</name>
        <dbReference type="ChEBI" id="CHEBI:29108"/>
    </ligand>
</feature>
<feature type="disulfide bond" evidence="1">
    <location>
        <begin position="29"/>
        <end position="45"/>
    </location>
</feature>
<feature type="non-terminal residue">
    <location>
        <position position="46"/>
    </location>
</feature>
<keyword id="KW-0106">Calcium</keyword>
<keyword id="KW-0903">Direct protein sequencing</keyword>
<keyword id="KW-1015">Disulfide bond</keyword>
<keyword id="KW-1199">Hemostasis impairing toxin</keyword>
<keyword id="KW-0378">Hydrolase</keyword>
<keyword id="KW-0442">Lipid degradation</keyword>
<keyword id="KW-0443">Lipid metabolism</keyword>
<keyword id="KW-0479">Metal-binding</keyword>
<keyword id="KW-1201">Platelet aggregation inhibiting toxin</keyword>
<keyword id="KW-0964">Secreted</keyword>
<keyword id="KW-0800">Toxin</keyword>
<comment type="function">
    <text>Snake venom phospholipase A2 (PLA2) that inhibits collagen-induced platelet aggregation. In terms of inhibition of platelet aggregation, superbin c is more potent as superbin d. PLA2 catalyzes the calcium-dependent hydrolysis of the 2-acyl groups in 3-sn-phosphoglycerides.</text>
</comment>
<comment type="catalytic activity">
    <reaction evidence="2">
        <text>a 1,2-diacyl-sn-glycero-3-phosphocholine + H2O = a 1-acyl-sn-glycero-3-phosphocholine + a fatty acid + H(+)</text>
        <dbReference type="Rhea" id="RHEA:15801"/>
        <dbReference type="ChEBI" id="CHEBI:15377"/>
        <dbReference type="ChEBI" id="CHEBI:15378"/>
        <dbReference type="ChEBI" id="CHEBI:28868"/>
        <dbReference type="ChEBI" id="CHEBI:57643"/>
        <dbReference type="ChEBI" id="CHEBI:58168"/>
        <dbReference type="EC" id="3.1.1.4"/>
    </reaction>
</comment>
<comment type="cofactor">
    <cofactor evidence="1">
        <name>Ca(2+)</name>
        <dbReference type="ChEBI" id="CHEBI:29108"/>
    </cofactor>
    <text evidence="1">Binds 1 Ca(2+) ion.</text>
</comment>
<comment type="subcellular location">
    <subcellularLocation>
        <location>Secreted</location>
    </subcellularLocation>
</comment>
<comment type="tissue specificity">
    <text>Expressed by the venom gland.</text>
</comment>
<comment type="mass spectrometry"/>
<comment type="similarity">
    <text evidence="4">Belongs to the phospholipase A2 family. Group I subfamily.</text>
</comment>